<accession>B6I1F2</accession>
<reference key="1">
    <citation type="journal article" date="2008" name="DNA Res.">
        <title>Complete genome sequence and comparative analysis of the wild-type commensal Escherichia coli strain SE11 isolated from a healthy adult.</title>
        <authorList>
            <person name="Oshima K."/>
            <person name="Toh H."/>
            <person name="Ogura Y."/>
            <person name="Sasamoto H."/>
            <person name="Morita H."/>
            <person name="Park S.-H."/>
            <person name="Ooka T."/>
            <person name="Iyoda S."/>
            <person name="Taylor T.D."/>
            <person name="Hayashi T."/>
            <person name="Itoh K."/>
            <person name="Hattori M."/>
        </authorList>
    </citation>
    <scope>NUCLEOTIDE SEQUENCE [LARGE SCALE GENOMIC DNA]</scope>
    <source>
        <strain>SE11</strain>
    </source>
</reference>
<organism>
    <name type="scientific">Escherichia coli (strain SE11)</name>
    <dbReference type="NCBI Taxonomy" id="409438"/>
    <lineage>
        <taxon>Bacteria</taxon>
        <taxon>Pseudomonadati</taxon>
        <taxon>Pseudomonadota</taxon>
        <taxon>Gammaproteobacteria</taxon>
        <taxon>Enterobacterales</taxon>
        <taxon>Enterobacteriaceae</taxon>
        <taxon>Escherichia</taxon>
    </lineage>
</organism>
<feature type="chain" id="PRO_1000133836" description="PF03932 family protein CutC">
    <location>
        <begin position="1"/>
        <end position="248"/>
    </location>
</feature>
<protein>
    <recommendedName>
        <fullName evidence="1">PF03932 family protein CutC</fullName>
    </recommendedName>
</protein>
<proteinExistence type="inferred from homology"/>
<gene>
    <name evidence="1" type="primary">cutC</name>
    <name type="ordered locus">ECSE_2109</name>
</gene>
<dbReference type="EMBL" id="AP009240">
    <property type="protein sequence ID" value="BAG77633.1"/>
    <property type="molecule type" value="Genomic_DNA"/>
</dbReference>
<dbReference type="RefSeq" id="WP_001185741.1">
    <property type="nucleotide sequence ID" value="NC_011415.1"/>
</dbReference>
<dbReference type="SMR" id="B6I1F2"/>
<dbReference type="GeneID" id="93776175"/>
<dbReference type="KEGG" id="ecy:ECSE_2109"/>
<dbReference type="HOGENOM" id="CLU_050555_3_1_6"/>
<dbReference type="Proteomes" id="UP000008199">
    <property type="component" value="Chromosome"/>
</dbReference>
<dbReference type="GO" id="GO:0005737">
    <property type="term" value="C:cytoplasm"/>
    <property type="evidence" value="ECO:0007669"/>
    <property type="project" value="UniProtKB-SubCell"/>
</dbReference>
<dbReference type="GO" id="GO:0005507">
    <property type="term" value="F:copper ion binding"/>
    <property type="evidence" value="ECO:0007669"/>
    <property type="project" value="TreeGrafter"/>
</dbReference>
<dbReference type="FunFam" id="3.20.20.380:FF:000001">
    <property type="entry name" value="Copper homeostasis protein CutC"/>
    <property type="match status" value="1"/>
</dbReference>
<dbReference type="Gene3D" id="3.20.20.380">
    <property type="entry name" value="Copper homeostasis (CutC) domain"/>
    <property type="match status" value="1"/>
</dbReference>
<dbReference type="HAMAP" id="MF_00795">
    <property type="entry name" value="CutC"/>
    <property type="match status" value="1"/>
</dbReference>
<dbReference type="InterPro" id="IPR005627">
    <property type="entry name" value="CutC-like"/>
</dbReference>
<dbReference type="InterPro" id="IPR036822">
    <property type="entry name" value="CutC-like_dom_sf"/>
</dbReference>
<dbReference type="NCBIfam" id="NF008603">
    <property type="entry name" value="PRK11572.1"/>
    <property type="match status" value="1"/>
</dbReference>
<dbReference type="PANTHER" id="PTHR12598">
    <property type="entry name" value="COPPER HOMEOSTASIS PROTEIN CUTC"/>
    <property type="match status" value="1"/>
</dbReference>
<dbReference type="PANTHER" id="PTHR12598:SF0">
    <property type="entry name" value="COPPER HOMEOSTASIS PROTEIN CUTC HOMOLOG"/>
    <property type="match status" value="1"/>
</dbReference>
<dbReference type="Pfam" id="PF03932">
    <property type="entry name" value="CutC"/>
    <property type="match status" value="1"/>
</dbReference>
<dbReference type="SUPFAM" id="SSF110395">
    <property type="entry name" value="CutC-like"/>
    <property type="match status" value="1"/>
</dbReference>
<keyword id="KW-0963">Cytoplasm</keyword>
<name>CUTC_ECOSE</name>
<evidence type="ECO:0000255" key="1">
    <source>
        <dbReference type="HAMAP-Rule" id="MF_00795"/>
    </source>
</evidence>
<sequence length="248" mass="26762">MALLEICCYSMECALTAQQNGADRVELCAAPKEGGLTPSLGVLKSVRQRVTIPVHPIIRPRGGDFCYSDGEFAAILEDVRTVRELGFPGLVTGVLDVDGNVDMPRMEKIMAAAGPLAVTFHRAFDMCANPLYTLNNLAELGIARVLTSGQKSDALQGLSKIMELIAHRDAPIIMAGAGVRAENLHHFLDAGVLEVHSSAGAWQASPMRYRNQGLSMSSDEHADEYSRYIVDGAAVAEMKGIIERHQAK</sequence>
<comment type="subunit">
    <text evidence="1">Homodimer.</text>
</comment>
<comment type="subcellular location">
    <subcellularLocation>
        <location evidence="1">Cytoplasm</location>
    </subcellularLocation>
</comment>
<comment type="similarity">
    <text evidence="1">Belongs to the CutC family.</text>
</comment>
<comment type="caution">
    <text evidence="1">Once thought to be involved in copper homeostasis, experiments in E.coli have shown this is not the case.</text>
</comment>